<organism>
    <name type="scientific">Anaeromyxobacter dehalogenans (strain 2CP-C)</name>
    <dbReference type="NCBI Taxonomy" id="290397"/>
    <lineage>
        <taxon>Bacteria</taxon>
        <taxon>Pseudomonadati</taxon>
        <taxon>Myxococcota</taxon>
        <taxon>Myxococcia</taxon>
        <taxon>Myxococcales</taxon>
        <taxon>Cystobacterineae</taxon>
        <taxon>Anaeromyxobacteraceae</taxon>
        <taxon>Anaeromyxobacter</taxon>
    </lineage>
</organism>
<gene>
    <name evidence="1" type="primary">cheB6</name>
    <name type="ordered locus">Adeh_2730</name>
</gene>
<name>CHEB6_ANADE</name>
<proteinExistence type="inferred from homology"/>
<feature type="chain" id="PRO_0000264261" description="Protein-glutamate methylesterase/protein-glutamine glutaminase 6">
    <location>
        <begin position="1"/>
        <end position="350"/>
    </location>
</feature>
<feature type="domain" description="Response regulatory" evidence="1">
    <location>
        <begin position="11"/>
        <end position="126"/>
    </location>
</feature>
<feature type="domain" description="CheB-type methylesterase" evidence="1">
    <location>
        <begin position="150"/>
        <end position="347"/>
    </location>
</feature>
<feature type="active site" evidence="1">
    <location>
        <position position="162"/>
    </location>
</feature>
<feature type="active site" evidence="1">
    <location>
        <position position="189"/>
    </location>
</feature>
<feature type="active site" evidence="1">
    <location>
        <position position="289"/>
    </location>
</feature>
<feature type="modified residue" description="4-aspartylphosphate" evidence="1">
    <location>
        <position position="62"/>
    </location>
</feature>
<comment type="function">
    <text evidence="1">Involved in chemotaxis. Part of a chemotaxis signal transduction system that modulates chemotaxis in response to various stimuli. Catalyzes the demethylation of specific methylglutamate residues introduced into the chemoreceptors (methyl-accepting chemotaxis proteins or MCP) by CheR. Also mediates the irreversible deamidation of specific glutamine residues to glutamic acid.</text>
</comment>
<comment type="catalytic activity">
    <reaction evidence="1">
        <text>[protein]-L-glutamate 5-O-methyl ester + H2O = L-glutamyl-[protein] + methanol + H(+)</text>
        <dbReference type="Rhea" id="RHEA:23236"/>
        <dbReference type="Rhea" id="RHEA-COMP:10208"/>
        <dbReference type="Rhea" id="RHEA-COMP:10311"/>
        <dbReference type="ChEBI" id="CHEBI:15377"/>
        <dbReference type="ChEBI" id="CHEBI:15378"/>
        <dbReference type="ChEBI" id="CHEBI:17790"/>
        <dbReference type="ChEBI" id="CHEBI:29973"/>
        <dbReference type="ChEBI" id="CHEBI:82795"/>
        <dbReference type="EC" id="3.1.1.61"/>
    </reaction>
</comment>
<comment type="catalytic activity">
    <reaction evidence="1">
        <text>L-glutaminyl-[protein] + H2O = L-glutamyl-[protein] + NH4(+)</text>
        <dbReference type="Rhea" id="RHEA:16441"/>
        <dbReference type="Rhea" id="RHEA-COMP:10207"/>
        <dbReference type="Rhea" id="RHEA-COMP:10208"/>
        <dbReference type="ChEBI" id="CHEBI:15377"/>
        <dbReference type="ChEBI" id="CHEBI:28938"/>
        <dbReference type="ChEBI" id="CHEBI:29973"/>
        <dbReference type="ChEBI" id="CHEBI:30011"/>
        <dbReference type="EC" id="3.5.1.44"/>
    </reaction>
</comment>
<comment type="subcellular location">
    <subcellularLocation>
        <location evidence="1">Cytoplasm</location>
    </subcellularLocation>
</comment>
<comment type="domain">
    <text evidence="1">Contains a C-terminal catalytic domain, and an N-terminal region which modulates catalytic activity.</text>
</comment>
<comment type="PTM">
    <text evidence="1">Phosphorylated by CheA. Phosphorylation of the N-terminal regulatory domain activates the methylesterase activity.</text>
</comment>
<comment type="similarity">
    <text evidence="1">Belongs to the CheB family.</text>
</comment>
<accession>Q2ILG8</accession>
<protein>
    <recommendedName>
        <fullName evidence="1">Protein-glutamate methylesterase/protein-glutamine glutaminase 6</fullName>
        <ecNumber evidence="1">3.1.1.61</ecNumber>
        <ecNumber evidence="1">3.5.1.44</ecNumber>
    </recommendedName>
</protein>
<evidence type="ECO:0000255" key="1">
    <source>
        <dbReference type="HAMAP-Rule" id="MF_00099"/>
    </source>
</evidence>
<reference key="1">
    <citation type="submission" date="2006-01" db="EMBL/GenBank/DDBJ databases">
        <title>Complete sequence of Anaeromyxobacter dehalogenans 2CP-C.</title>
        <authorList>
            <person name="Copeland A."/>
            <person name="Lucas S."/>
            <person name="Lapidus A."/>
            <person name="Barry K."/>
            <person name="Detter J.C."/>
            <person name="Glavina T."/>
            <person name="Hammon N."/>
            <person name="Israni S."/>
            <person name="Pitluck S."/>
            <person name="Brettin T."/>
            <person name="Bruce D."/>
            <person name="Han C."/>
            <person name="Tapia R."/>
            <person name="Gilna P."/>
            <person name="Kiss H."/>
            <person name="Schmutz J."/>
            <person name="Larimer F."/>
            <person name="Land M."/>
            <person name="Kyrpides N."/>
            <person name="Anderson I."/>
            <person name="Sanford R.A."/>
            <person name="Ritalahti K.M."/>
            <person name="Thomas H.S."/>
            <person name="Kirby J.R."/>
            <person name="Zhulin I.B."/>
            <person name="Loeffler F.E."/>
            <person name="Richardson P."/>
        </authorList>
    </citation>
    <scope>NUCLEOTIDE SEQUENCE [LARGE SCALE GENOMIC DNA]</scope>
    <source>
        <strain>2CP-C</strain>
    </source>
</reference>
<sequence length="350" mass="36538">MSREGRRRTLRVLVVDDSAASRDELVRLLHGGDGLVVAGTAADGEQGLAEALRLEPDVVVLDLQMPRMDGFTFLRLLMARRPTPVVVLSSRSRRADVFKALELGALDFVARPERGGLAPVREELLEKCATVRALRIQNLSAGARALDARELEPARVAVVGASTGGPSALQRLLAALPGELPLAVLVAQHMPERFTGAFAERLARGSHFSVVEAVDGDLVVAGRALVAPGGHHLELARGADGVLRAAVLPPGAPGPGARHCPSIDRLFRSAARMLGRRACAALLTGMGTDGRDGIAAVKAAGGLTLAESEETAVVYGMPQAAAETGAVDALLGLDALTARLVEFARDARAP</sequence>
<keyword id="KW-0145">Chemotaxis</keyword>
<keyword id="KW-0963">Cytoplasm</keyword>
<keyword id="KW-0378">Hydrolase</keyword>
<keyword id="KW-0597">Phosphoprotein</keyword>
<keyword id="KW-1185">Reference proteome</keyword>
<dbReference type="EC" id="3.1.1.61" evidence="1"/>
<dbReference type="EC" id="3.5.1.44" evidence="1"/>
<dbReference type="EMBL" id="CP000251">
    <property type="protein sequence ID" value="ABC82500.1"/>
    <property type="molecule type" value="Genomic_DNA"/>
</dbReference>
<dbReference type="RefSeq" id="WP_011421782.1">
    <property type="nucleotide sequence ID" value="NC_007760.1"/>
</dbReference>
<dbReference type="SMR" id="Q2ILG8"/>
<dbReference type="STRING" id="290397.Adeh_2730"/>
<dbReference type="KEGG" id="ade:Adeh_2730"/>
<dbReference type="eggNOG" id="COG2201">
    <property type="taxonomic scope" value="Bacteria"/>
</dbReference>
<dbReference type="HOGENOM" id="CLU_000445_51_0_7"/>
<dbReference type="OrthoDB" id="9793421at2"/>
<dbReference type="Proteomes" id="UP000001935">
    <property type="component" value="Chromosome"/>
</dbReference>
<dbReference type="GO" id="GO:0005737">
    <property type="term" value="C:cytoplasm"/>
    <property type="evidence" value="ECO:0007669"/>
    <property type="project" value="UniProtKB-SubCell"/>
</dbReference>
<dbReference type="GO" id="GO:0000156">
    <property type="term" value="F:phosphorelay response regulator activity"/>
    <property type="evidence" value="ECO:0007669"/>
    <property type="project" value="InterPro"/>
</dbReference>
<dbReference type="GO" id="GO:0008984">
    <property type="term" value="F:protein-glutamate methylesterase activity"/>
    <property type="evidence" value="ECO:0007669"/>
    <property type="project" value="UniProtKB-UniRule"/>
</dbReference>
<dbReference type="GO" id="GO:0050568">
    <property type="term" value="F:protein-glutamine glutaminase activity"/>
    <property type="evidence" value="ECO:0007669"/>
    <property type="project" value="UniProtKB-UniRule"/>
</dbReference>
<dbReference type="GO" id="GO:0006935">
    <property type="term" value="P:chemotaxis"/>
    <property type="evidence" value="ECO:0007669"/>
    <property type="project" value="UniProtKB-UniRule"/>
</dbReference>
<dbReference type="CDD" id="cd16432">
    <property type="entry name" value="CheB_Rec"/>
    <property type="match status" value="1"/>
</dbReference>
<dbReference type="CDD" id="cd17541">
    <property type="entry name" value="REC_CheB-like"/>
    <property type="match status" value="1"/>
</dbReference>
<dbReference type="Gene3D" id="3.40.50.2300">
    <property type="match status" value="1"/>
</dbReference>
<dbReference type="Gene3D" id="3.40.50.180">
    <property type="entry name" value="Methylesterase CheB, C-terminal domain"/>
    <property type="match status" value="1"/>
</dbReference>
<dbReference type="HAMAP" id="MF_00099">
    <property type="entry name" value="CheB_chemtxs"/>
    <property type="match status" value="1"/>
</dbReference>
<dbReference type="InterPro" id="IPR008248">
    <property type="entry name" value="CheB-like"/>
</dbReference>
<dbReference type="InterPro" id="IPR035909">
    <property type="entry name" value="CheB_C"/>
</dbReference>
<dbReference type="InterPro" id="IPR011006">
    <property type="entry name" value="CheY-like_superfamily"/>
</dbReference>
<dbReference type="InterPro" id="IPR000673">
    <property type="entry name" value="Sig_transdc_resp-reg_Me-estase"/>
</dbReference>
<dbReference type="InterPro" id="IPR001789">
    <property type="entry name" value="Sig_transdc_resp-reg_receiver"/>
</dbReference>
<dbReference type="NCBIfam" id="NF001965">
    <property type="entry name" value="PRK00742.1"/>
    <property type="match status" value="1"/>
</dbReference>
<dbReference type="PANTHER" id="PTHR42872">
    <property type="entry name" value="PROTEIN-GLUTAMATE METHYLESTERASE/PROTEIN-GLUTAMINE GLUTAMINASE"/>
    <property type="match status" value="1"/>
</dbReference>
<dbReference type="PANTHER" id="PTHR42872:SF6">
    <property type="entry name" value="PROTEIN-GLUTAMATE METHYLESTERASE_PROTEIN-GLUTAMINE GLUTAMINASE"/>
    <property type="match status" value="1"/>
</dbReference>
<dbReference type="Pfam" id="PF01339">
    <property type="entry name" value="CheB_methylest"/>
    <property type="match status" value="1"/>
</dbReference>
<dbReference type="Pfam" id="PF00072">
    <property type="entry name" value="Response_reg"/>
    <property type="match status" value="1"/>
</dbReference>
<dbReference type="PIRSF" id="PIRSF000876">
    <property type="entry name" value="RR_chemtxs_CheB"/>
    <property type="match status" value="1"/>
</dbReference>
<dbReference type="SMART" id="SM00448">
    <property type="entry name" value="REC"/>
    <property type="match status" value="1"/>
</dbReference>
<dbReference type="SUPFAM" id="SSF52172">
    <property type="entry name" value="CheY-like"/>
    <property type="match status" value="1"/>
</dbReference>
<dbReference type="SUPFAM" id="SSF52738">
    <property type="entry name" value="Methylesterase CheB, C-terminal domain"/>
    <property type="match status" value="1"/>
</dbReference>
<dbReference type="PROSITE" id="PS50122">
    <property type="entry name" value="CHEB"/>
    <property type="match status" value="1"/>
</dbReference>
<dbReference type="PROSITE" id="PS50110">
    <property type="entry name" value="RESPONSE_REGULATORY"/>
    <property type="match status" value="1"/>
</dbReference>